<name>THG1_HUMAN</name>
<reference key="1">
    <citation type="journal article" date="2004" name="J. Biol. Chem.">
        <title>Identification and characterization of a novel cytoplasm protein ICF45 that is involved in cell cycle regulation.</title>
        <authorList>
            <person name="Guo D."/>
            <person name="Hu K."/>
            <person name="Lei Y."/>
            <person name="Wang Y."/>
            <person name="Ma T."/>
            <person name="He D."/>
        </authorList>
    </citation>
    <scope>NUCLEOTIDE SEQUENCE [MRNA]</scope>
    <scope>SUBCELLULAR LOCATION</scope>
    <scope>TISSUE SPECIFICITY</scope>
</reference>
<reference key="2">
    <citation type="journal article" date="2001" name="Genome Res.">
        <title>Towards a catalog of human genes and proteins: sequencing and analysis of 500 novel complete protein coding human cDNAs.</title>
        <authorList>
            <person name="Wiemann S."/>
            <person name="Weil B."/>
            <person name="Wellenreuther R."/>
            <person name="Gassenhuber J."/>
            <person name="Glassl S."/>
            <person name="Ansorge W."/>
            <person name="Boecher M."/>
            <person name="Bloecker H."/>
            <person name="Bauersachs S."/>
            <person name="Blum H."/>
            <person name="Lauber J."/>
            <person name="Duesterhoeft A."/>
            <person name="Beyer A."/>
            <person name="Koehrer K."/>
            <person name="Strack N."/>
            <person name="Mewes H.-W."/>
            <person name="Ottenwaelder B."/>
            <person name="Obermaier B."/>
            <person name="Tampe J."/>
            <person name="Heubner D."/>
            <person name="Wambutt R."/>
            <person name="Korn B."/>
            <person name="Klein M."/>
            <person name="Poustka A."/>
        </authorList>
    </citation>
    <scope>NUCLEOTIDE SEQUENCE [LARGE SCALE MRNA]</scope>
    <source>
        <tissue>Brain</tissue>
    </source>
</reference>
<reference key="3">
    <citation type="journal article" date="2004" name="Nat. Genet.">
        <title>Complete sequencing and characterization of 21,243 full-length human cDNAs.</title>
        <authorList>
            <person name="Ota T."/>
            <person name="Suzuki Y."/>
            <person name="Nishikawa T."/>
            <person name="Otsuki T."/>
            <person name="Sugiyama T."/>
            <person name="Irie R."/>
            <person name="Wakamatsu A."/>
            <person name="Hayashi K."/>
            <person name="Sato H."/>
            <person name="Nagai K."/>
            <person name="Kimura K."/>
            <person name="Makita H."/>
            <person name="Sekine M."/>
            <person name="Obayashi M."/>
            <person name="Nishi T."/>
            <person name="Shibahara T."/>
            <person name="Tanaka T."/>
            <person name="Ishii S."/>
            <person name="Yamamoto J."/>
            <person name="Saito K."/>
            <person name="Kawai Y."/>
            <person name="Isono Y."/>
            <person name="Nakamura Y."/>
            <person name="Nagahari K."/>
            <person name="Murakami K."/>
            <person name="Yasuda T."/>
            <person name="Iwayanagi T."/>
            <person name="Wagatsuma M."/>
            <person name="Shiratori A."/>
            <person name="Sudo H."/>
            <person name="Hosoiri T."/>
            <person name="Kaku Y."/>
            <person name="Kodaira H."/>
            <person name="Kondo H."/>
            <person name="Sugawara M."/>
            <person name="Takahashi M."/>
            <person name="Kanda K."/>
            <person name="Yokoi T."/>
            <person name="Furuya T."/>
            <person name="Kikkawa E."/>
            <person name="Omura Y."/>
            <person name="Abe K."/>
            <person name="Kamihara K."/>
            <person name="Katsuta N."/>
            <person name="Sato K."/>
            <person name="Tanikawa M."/>
            <person name="Yamazaki M."/>
            <person name="Ninomiya K."/>
            <person name="Ishibashi T."/>
            <person name="Yamashita H."/>
            <person name="Murakawa K."/>
            <person name="Fujimori K."/>
            <person name="Tanai H."/>
            <person name="Kimata M."/>
            <person name="Watanabe M."/>
            <person name="Hiraoka S."/>
            <person name="Chiba Y."/>
            <person name="Ishida S."/>
            <person name="Ono Y."/>
            <person name="Takiguchi S."/>
            <person name="Watanabe S."/>
            <person name="Yosida M."/>
            <person name="Hotuta T."/>
            <person name="Kusano J."/>
            <person name="Kanehori K."/>
            <person name="Takahashi-Fujii A."/>
            <person name="Hara H."/>
            <person name="Tanase T.-O."/>
            <person name="Nomura Y."/>
            <person name="Togiya S."/>
            <person name="Komai F."/>
            <person name="Hara R."/>
            <person name="Takeuchi K."/>
            <person name="Arita M."/>
            <person name="Imose N."/>
            <person name="Musashino K."/>
            <person name="Yuuki H."/>
            <person name="Oshima A."/>
            <person name="Sasaki N."/>
            <person name="Aotsuka S."/>
            <person name="Yoshikawa Y."/>
            <person name="Matsunawa H."/>
            <person name="Ichihara T."/>
            <person name="Shiohata N."/>
            <person name="Sano S."/>
            <person name="Moriya S."/>
            <person name="Momiyama H."/>
            <person name="Satoh N."/>
            <person name="Takami S."/>
            <person name="Terashima Y."/>
            <person name="Suzuki O."/>
            <person name="Nakagawa S."/>
            <person name="Senoh A."/>
            <person name="Mizoguchi H."/>
            <person name="Goto Y."/>
            <person name="Shimizu F."/>
            <person name="Wakebe H."/>
            <person name="Hishigaki H."/>
            <person name="Watanabe T."/>
            <person name="Sugiyama A."/>
            <person name="Takemoto M."/>
            <person name="Kawakami B."/>
            <person name="Yamazaki M."/>
            <person name="Watanabe K."/>
            <person name="Kumagai A."/>
            <person name="Itakura S."/>
            <person name="Fukuzumi Y."/>
            <person name="Fujimori Y."/>
            <person name="Komiyama M."/>
            <person name="Tashiro H."/>
            <person name="Tanigami A."/>
            <person name="Fujiwara T."/>
            <person name="Ono T."/>
            <person name="Yamada K."/>
            <person name="Fujii Y."/>
            <person name="Ozaki K."/>
            <person name="Hirao M."/>
            <person name="Ohmori Y."/>
            <person name="Kawabata A."/>
            <person name="Hikiji T."/>
            <person name="Kobatake N."/>
            <person name="Inagaki H."/>
            <person name="Ikema Y."/>
            <person name="Okamoto S."/>
            <person name="Okitani R."/>
            <person name="Kawakami T."/>
            <person name="Noguchi S."/>
            <person name="Itoh T."/>
            <person name="Shigeta K."/>
            <person name="Senba T."/>
            <person name="Matsumura K."/>
            <person name="Nakajima Y."/>
            <person name="Mizuno T."/>
            <person name="Morinaga M."/>
            <person name="Sasaki M."/>
            <person name="Togashi T."/>
            <person name="Oyama M."/>
            <person name="Hata H."/>
            <person name="Watanabe M."/>
            <person name="Komatsu T."/>
            <person name="Mizushima-Sugano J."/>
            <person name="Satoh T."/>
            <person name="Shirai Y."/>
            <person name="Takahashi Y."/>
            <person name="Nakagawa K."/>
            <person name="Okumura K."/>
            <person name="Nagase T."/>
            <person name="Nomura N."/>
            <person name="Kikuchi H."/>
            <person name="Masuho Y."/>
            <person name="Yamashita R."/>
            <person name="Nakai K."/>
            <person name="Yada T."/>
            <person name="Nakamura Y."/>
            <person name="Ohara O."/>
            <person name="Isogai T."/>
            <person name="Sugano S."/>
        </authorList>
    </citation>
    <scope>NUCLEOTIDE SEQUENCE [LARGE SCALE MRNA]</scope>
    <scope>VARIANT PRO-232</scope>
</reference>
<reference key="4">
    <citation type="submission" date="2004-06" db="EMBL/GenBank/DDBJ databases">
        <title>Cloning of human full open reading frames in Gateway(TM) system entry vector (pDONR201).</title>
        <authorList>
            <person name="Ebert L."/>
            <person name="Schick M."/>
            <person name="Neubert P."/>
            <person name="Schatten R."/>
            <person name="Henze S."/>
            <person name="Korn B."/>
        </authorList>
    </citation>
    <scope>NUCLEOTIDE SEQUENCE [LARGE SCALE MRNA]</scope>
</reference>
<reference key="5">
    <citation type="submission" date="2005-04" db="EMBL/GenBank/DDBJ databases">
        <authorList>
            <person name="Suzuki Y."/>
            <person name="Sugano S."/>
            <person name="Totoki Y."/>
            <person name="Toyoda A."/>
            <person name="Takeda T."/>
            <person name="Sakaki Y."/>
            <person name="Tanaka A."/>
            <person name="Yokoyama S."/>
        </authorList>
    </citation>
    <scope>NUCLEOTIDE SEQUENCE [LARGE SCALE MRNA]</scope>
    <scope>VARIANT PRO-232</scope>
</reference>
<reference key="6">
    <citation type="submission" date="2005-09" db="EMBL/GenBank/DDBJ databases">
        <authorList>
            <person name="Mural R.J."/>
            <person name="Istrail S."/>
            <person name="Sutton G.G."/>
            <person name="Florea L."/>
            <person name="Halpern A.L."/>
            <person name="Mobarry C.M."/>
            <person name="Lippert R."/>
            <person name="Walenz B."/>
            <person name="Shatkay H."/>
            <person name="Dew I."/>
            <person name="Miller J.R."/>
            <person name="Flanigan M.J."/>
            <person name="Edwards N.J."/>
            <person name="Bolanos R."/>
            <person name="Fasulo D."/>
            <person name="Halldorsson B.V."/>
            <person name="Hannenhalli S."/>
            <person name="Turner R."/>
            <person name="Yooseph S."/>
            <person name="Lu F."/>
            <person name="Nusskern D.R."/>
            <person name="Shue B.C."/>
            <person name="Zheng X.H."/>
            <person name="Zhong F."/>
            <person name="Delcher A.L."/>
            <person name="Huson D.H."/>
            <person name="Kravitz S.A."/>
            <person name="Mouchard L."/>
            <person name="Reinert K."/>
            <person name="Remington K.A."/>
            <person name="Clark A.G."/>
            <person name="Waterman M.S."/>
            <person name="Eichler E.E."/>
            <person name="Adams M.D."/>
            <person name="Hunkapiller M.W."/>
            <person name="Myers E.W."/>
            <person name="Venter J.C."/>
        </authorList>
    </citation>
    <scope>NUCLEOTIDE SEQUENCE [LARGE SCALE GENOMIC DNA]</scope>
    <scope>VARIANT PRO-232</scope>
</reference>
<reference key="7">
    <citation type="journal article" date="2004" name="Genome Res.">
        <title>The status, quality, and expansion of the NIH full-length cDNA project: the Mammalian Gene Collection (MGC).</title>
        <authorList>
            <consortium name="The MGC Project Team"/>
        </authorList>
    </citation>
    <scope>NUCLEOTIDE SEQUENCE [LARGE SCALE MRNA]</scope>
    <scope>VARIANT PRO-232</scope>
    <source>
        <tissue>Brain</tissue>
        <tissue>Muscle</tissue>
    </source>
</reference>
<reference key="8">
    <citation type="journal article" date="2014" name="Diabetes">
        <title>IHG-1 increases mitochondrial fusion and bioenergetic function.</title>
        <authorList>
            <person name="Hickey F.B."/>
            <person name="Corcoran J.B."/>
            <person name="Griffin B."/>
            <person name="Bhreathnach U."/>
            <person name="Mortiboys H."/>
            <person name="Reid H.M."/>
            <person name="Andrews D."/>
            <person name="Byrne S."/>
            <person name="Furlong F."/>
            <person name="Martin F."/>
            <person name="Godson C."/>
            <person name="Murphy M."/>
        </authorList>
    </citation>
    <scope>FUNCTION</scope>
    <scope>SUBCELLULAR LOCATION</scope>
    <scope>INTERACTION WITH MFN1 AND MFN2</scope>
</reference>
<reference key="9">
    <citation type="journal article" date="2010" name="Proc. Natl. Acad. Sci. U.S.A.">
        <title>tRNA(His) guanylyltransferase (THG1), a unique 3'-5' nucleotidyl transferase, shares unexpected structural homology with canonical 5'-3' DNA polymerases.</title>
        <authorList>
            <person name="Hyde S.J."/>
            <person name="Eckenroth B.E."/>
            <person name="Smith B.A."/>
            <person name="Eberley W.A."/>
            <person name="Heintz N.H."/>
            <person name="Jackman J.E."/>
            <person name="Doublie S."/>
        </authorList>
    </citation>
    <scope>X-RAY CRYSTALLOGRAPHY (2.28 ANGSTROMS) OF 30-298 IN COMPLEX WITH MAGNESIUM; TRIPHOSPHATE AND GTP</scope>
    <scope>FUNCTION</scope>
    <scope>CATALYTIC ACTIVITY</scope>
    <scope>COFACTOR</scope>
    <scope>SUBUNIT</scope>
    <scope>MUTAGENESIS OF ASP-58; HIS-63; SER-104; ASP-105; GLU-106; THR-127; HIS-181; LYS-216 AND ASN-227</scope>
</reference>
<reference key="10">
    <citation type="journal article" date="2016" name="Neurogenetics">
        <title>A mutation in the THG1L gene in a family with cerebellar ataxia and developmental delay.</title>
        <authorList>
            <person name="Edvardson S."/>
            <person name="Elbaz-Alon Y."/>
            <person name="Jalas C."/>
            <person name="Matlock A."/>
            <person name="Patel K."/>
            <person name="Labbe K."/>
            <person name="Shaag A."/>
            <person name="Jackman J.E."/>
            <person name="Elpeleg O."/>
        </authorList>
    </citation>
    <scope>INVOLVEMENT IN SCAR28</scope>
    <scope>VARIANT SCAR28 ALA-55</scope>
    <scope>CHARACTERIZATION OF VARIANT SCAR28 ALA-55</scope>
    <scope>FUNCTION</scope>
</reference>
<reference key="11">
    <citation type="journal article" date="2019" name="Am. J. Med. Genet. A">
        <title>Refining the phenotype of the THG1L (p.Val55Ala mutation)-related mitochondrial autosomal recessive congenital cerebellar ataxia.</title>
        <authorList>
            <person name="Walker M.A."/>
            <person name="Lerman-Sagie T."/>
            <person name="Swoboda K."/>
            <person name="Lev D."/>
            <person name="Blumkin L."/>
        </authorList>
    </citation>
    <scope>VARIANT SCAR28 ALA-55</scope>
</reference>
<reference key="12">
    <citation type="journal article" date="2019" name="Genet. Med.">
        <title>Genomic and phenotypic delineation of congenital microcephaly.</title>
        <authorList>
            <person name="Shaheen R."/>
            <person name="Maddirevula S."/>
            <person name="Ewida N."/>
            <person name="Alsahli S."/>
            <person name="Abdel-Salam G.M.H."/>
            <person name="Zaki M.S."/>
            <person name="Tala S.A."/>
            <person name="Alhashem A."/>
            <person name="Softah A."/>
            <person name="Al-Owain M."/>
            <person name="Alazami A.M."/>
            <person name="Abadel B."/>
            <person name="Patel N."/>
            <person name="Al-Sheddi T."/>
            <person name="Alomar R."/>
            <person name="Alobeid E."/>
            <person name="Ibrahim N."/>
            <person name="Hashem M."/>
            <person name="Abdulwahab F."/>
            <person name="Hamad M."/>
            <person name="Tabarki B."/>
            <person name="Alwadei A.H."/>
            <person name="Alhazzani F."/>
            <person name="Bashiri F.A."/>
            <person name="Kentab A."/>
            <person name="Sahintuerk S."/>
            <person name="Sherr E."/>
            <person name="Fregeau B."/>
            <person name="Sogati S."/>
            <person name="Alshahwan S.A.M."/>
            <person name="Alkhalifi S."/>
            <person name="Alhumaidi Z."/>
            <person name="Temtamy S."/>
            <person name="Aglan M."/>
            <person name="Otaify G."/>
            <person name="Girisha K.M."/>
            <person name="Tulbah M."/>
            <person name="Seidahmed M.Z."/>
            <person name="Salih M.A."/>
            <person name="Abouelhoda M."/>
            <person name="Momin A.A."/>
            <person name="Saffar M.A."/>
            <person name="Partlow J.N."/>
            <person name="Arold S.T."/>
            <person name="Faqeih E."/>
            <person name="Walsh C."/>
            <person name="Alkuraya F.S."/>
        </authorList>
    </citation>
    <scope>VARIANT PRO-294</scope>
</reference>
<keyword id="KW-0002">3D-structure</keyword>
<keyword id="KW-0963">Cytoplasm</keyword>
<keyword id="KW-0225">Disease variant</keyword>
<keyword id="KW-0342">GTP-binding</keyword>
<keyword id="KW-0460">Magnesium</keyword>
<keyword id="KW-0472">Membrane</keyword>
<keyword id="KW-0479">Metal-binding</keyword>
<keyword id="KW-0496">Mitochondrion</keyword>
<keyword id="KW-1000">Mitochondrion outer membrane</keyword>
<keyword id="KW-0523">Neurodegeneration</keyword>
<keyword id="KW-0547">Nucleotide-binding</keyword>
<keyword id="KW-0548">Nucleotidyltransferase</keyword>
<keyword id="KW-1267">Proteomics identification</keyword>
<keyword id="KW-1185">Reference proteome</keyword>
<keyword id="KW-0808">Transferase</keyword>
<keyword id="KW-0819">tRNA processing</keyword>
<gene>
    <name type="primary">THG1L</name>
    <name type="synonym">ICF45</name>
</gene>
<evidence type="ECO:0000269" key="1">
    <source>
    </source>
</evidence>
<evidence type="ECO:0000269" key="2">
    <source>
    </source>
</evidence>
<evidence type="ECO:0000269" key="3">
    <source>
    </source>
</evidence>
<evidence type="ECO:0000269" key="4">
    <source>
    </source>
</evidence>
<evidence type="ECO:0000269" key="5">
    <source>
    </source>
</evidence>
<evidence type="ECO:0000269" key="6">
    <source>
    </source>
</evidence>
<evidence type="ECO:0000269" key="7">
    <source>
    </source>
</evidence>
<evidence type="ECO:0000269" key="8">
    <source>
    </source>
</evidence>
<evidence type="ECO:0000269" key="9">
    <source ref="5"/>
</evidence>
<evidence type="ECO:0000269" key="10">
    <source ref="6"/>
</evidence>
<evidence type="ECO:0000303" key="11">
    <source>
    </source>
</evidence>
<evidence type="ECO:0000305" key="12"/>
<evidence type="ECO:0000305" key="13">
    <source>
    </source>
</evidence>
<evidence type="ECO:0000305" key="14">
    <source>
    </source>
</evidence>
<evidence type="ECO:0007829" key="15">
    <source>
        <dbReference type="PDB" id="3OTB"/>
    </source>
</evidence>
<evidence type="ECO:0007829" key="16">
    <source>
        <dbReference type="PDB" id="3OTD"/>
    </source>
</evidence>
<protein>
    <recommendedName>
        <fullName>Probable tRNA(His) guanylyltransferase</fullName>
        <ecNumber evidence="4">2.7.7.79</ecNumber>
    </recommendedName>
    <alternativeName>
        <fullName evidence="11">Induced in high glucose-1</fullName>
        <shortName evidence="11">IHG-1</shortName>
    </alternativeName>
    <alternativeName>
        <fullName>Interphase cytoplasmic foci protein 45</fullName>
    </alternativeName>
    <alternativeName>
        <fullName>tRNA-histidine guanylyltransferase</fullName>
    </alternativeName>
</protein>
<comment type="function">
    <text evidence="5 6 13">Adds a GMP to the 5'-end of tRNA(His) after transcription and RNase P cleavage. This step is essential for proper recognition of the tRNA and for the fidelity of protein synthesis (Probable). Also functions as a guanyl-nucleotide exchange factor/GEF for the MFN1 and MFN2 mitofusins thereby regulating mitochondrial fusion (PubMed:25008184, PubMed:27307223). By regulating both mitochondrial dynamics and bioenergetic function, it contributes to cell survival following oxidative stress (PubMed:25008184, PubMed:27307223).</text>
</comment>
<comment type="catalytic activity">
    <reaction evidence="4">
        <text>a 5'-end ribonucleotide-tRNA(His) + GTP + ATP + H2O = a 5'-end phospho-guanosine-ribonucleotide-tRNA(His) + AMP + 2 diphosphate + H(+)</text>
        <dbReference type="Rhea" id="RHEA:54564"/>
        <dbReference type="Rhea" id="RHEA-COMP:14193"/>
        <dbReference type="Rhea" id="RHEA-COMP:14917"/>
        <dbReference type="ChEBI" id="CHEBI:15377"/>
        <dbReference type="ChEBI" id="CHEBI:15378"/>
        <dbReference type="ChEBI" id="CHEBI:30616"/>
        <dbReference type="ChEBI" id="CHEBI:33019"/>
        <dbReference type="ChEBI" id="CHEBI:37565"/>
        <dbReference type="ChEBI" id="CHEBI:138282"/>
        <dbReference type="ChEBI" id="CHEBI:141847"/>
        <dbReference type="ChEBI" id="CHEBI:456215"/>
        <dbReference type="EC" id="2.7.7.79"/>
    </reaction>
</comment>
<comment type="cofactor">
    <cofactor evidence="4">
        <name>Mg(2+)</name>
        <dbReference type="ChEBI" id="CHEBI:18420"/>
    </cofactor>
    <text evidence="4">Binds 2 magnesium ions per subunit.</text>
</comment>
<comment type="subunit">
    <text evidence="4 5">Homotetramer (PubMed:21059936). Interacts with MFN1 and MFN2; functions as a guanyl-nucleotide exchange factor/GEF for MFN2 and also probably MFN1 (PubMed:25008184).</text>
</comment>
<comment type="interaction">
    <interactant intactId="EBI-746510">
        <id>Q9NWX6</id>
    </interactant>
    <interactant intactId="EBI-739832">
        <id>Q8TBB1</id>
        <label>LNX1</label>
    </interactant>
    <organismsDiffer>false</organismsDiffer>
    <experiments>3</experiments>
</comment>
<comment type="interaction">
    <interactant intactId="EBI-746510">
        <id>Q9NWX6</id>
    </interactant>
    <interactant intactId="EBI-741158">
        <id>Q96HA8</id>
        <label>NTAQ1</label>
    </interactant>
    <organismsDiffer>false</organismsDiffer>
    <experiments>3</experiments>
</comment>
<comment type="interaction">
    <interactant intactId="EBI-746510">
        <id>Q9NWX6</id>
    </interactant>
    <interactant intactId="EBI-742388">
        <id>Q9H8W4</id>
        <label>PLEKHF2</label>
    </interactant>
    <organismsDiffer>false</organismsDiffer>
    <experiments>3</experiments>
</comment>
<comment type="interaction">
    <interactant intactId="EBI-746510">
        <id>Q9NWX6</id>
    </interactant>
    <interactant intactId="EBI-727004">
        <id>O00560</id>
        <label>SDCBP</label>
    </interactant>
    <organismsDiffer>false</organismsDiffer>
    <experiments>3</experiments>
</comment>
<comment type="interaction">
    <interactant intactId="EBI-746510">
        <id>Q9NWX6</id>
    </interactant>
    <interactant intactId="EBI-710997">
        <id>P54274</id>
        <label>TERF1</label>
    </interactant>
    <organismsDiffer>false</organismsDiffer>
    <experiments>2</experiments>
</comment>
<comment type="interaction">
    <interactant intactId="EBI-746510">
        <id>Q9NWX6</id>
    </interactant>
    <interactant intactId="EBI-746510">
        <id>Q9NWX6</id>
        <label>THG1L</label>
    </interactant>
    <organismsDiffer>false</organismsDiffer>
    <experiments>4</experiments>
</comment>
<comment type="subcellular location">
    <subcellularLocation>
        <location evidence="2">Cytoplasm</location>
    </subcellularLocation>
    <subcellularLocation>
        <location evidence="14">Mitochondrion outer membrane</location>
    </subcellularLocation>
</comment>
<comment type="tissue specificity">
    <text evidence="2">Expressed in many tissues.</text>
</comment>
<comment type="disease" evidence="6 8">
    <disease id="DI-05783">
        <name>Spinocerebellar ataxia, autosomal recessive, 28</name>
        <acronym>SCAR28</acronym>
        <description>A form of spinocerebellar ataxia, a clinically and genetically heterogeneous group of cerebellar disorders due to degeneration of the cerebellum with variable involvement of the brainstem and spinal cord. SCAR28 patients manifest mild motor developmental delay, gait ataxia, and dysarthria. Some patients show mildly impaired intellectual development. Disease onset is in early childhood.</description>
        <dbReference type="MIM" id="618800"/>
    </disease>
    <text>The disease is caused by variants affecting the gene represented in this entry.</text>
</comment>
<comment type="similarity">
    <text evidence="12">Belongs to the tRNA(His) guanylyltransferase family.</text>
</comment>
<comment type="sequence caution" evidence="12">
    <conflict type="erroneous initiation">
        <sequence resource="EMBL-CDS" id="AAH01523"/>
    </conflict>
    <text>Truncated N-terminus.</text>
</comment>
<comment type="sequence caution" evidence="12">
    <conflict type="erroneous initiation">
        <sequence resource="EMBL-CDS" id="AAH01852"/>
    </conflict>
    <text>Truncated N-terminus.</text>
</comment>
<accession>Q9NWX6</accession>
<accession>D3DQJ5</accession>
<accession>Q53G12</accession>
<accession>Q7L5R3</accession>
<accession>Q9H0S2</accession>
<proteinExistence type="evidence at protein level"/>
<organism>
    <name type="scientific">Homo sapiens</name>
    <name type="common">Human</name>
    <dbReference type="NCBI Taxonomy" id="9606"/>
    <lineage>
        <taxon>Eukaryota</taxon>
        <taxon>Metazoa</taxon>
        <taxon>Chordata</taxon>
        <taxon>Craniata</taxon>
        <taxon>Vertebrata</taxon>
        <taxon>Euteleostomi</taxon>
        <taxon>Mammalia</taxon>
        <taxon>Eutheria</taxon>
        <taxon>Euarchontoglires</taxon>
        <taxon>Primates</taxon>
        <taxon>Haplorrhini</taxon>
        <taxon>Catarrhini</taxon>
        <taxon>Hominidae</taxon>
        <taxon>Homo</taxon>
    </lineage>
</organism>
<sequence length="298" mass="34831">MWGACKVKVHDSLATISITLRRYLRLGATMAKSKFEYVRDFEADDTCLAHCWVVVRLDGRNFHRFAEKHNFAKPNDSRALQLMTKCAQTVMEELEDIVIAYGQSDEYSFVFKRKTNWFKRRASKFMTHVASQFASSYVFYWRDYFEDQPLLYPPGFDGRVVVYPSNQTLKDYLSWRQADCHINNLYNTVFWALIQQSGLTPVQAQGRLQGTLAADKNEILFSEFNINYNNELPMYRKGTVLIWQKVDEVMTKEIKLPTEMEGKKMAVTRTRTKPVPLHCDIIGDAFWKEHPEILDEDS</sequence>
<dbReference type="EC" id="2.7.7.79" evidence="4"/>
<dbReference type="EMBL" id="AY463216">
    <property type="protein sequence ID" value="AAS21134.1"/>
    <property type="molecule type" value="mRNA"/>
</dbReference>
<dbReference type="EMBL" id="AL136669">
    <property type="protein sequence ID" value="CAB66604.1"/>
    <property type="molecule type" value="mRNA"/>
</dbReference>
<dbReference type="EMBL" id="AK000553">
    <property type="protein sequence ID" value="BAA91249.1"/>
    <property type="molecule type" value="mRNA"/>
</dbReference>
<dbReference type="EMBL" id="AK021663">
    <property type="protein sequence ID" value="BAB13870.1"/>
    <property type="molecule type" value="mRNA"/>
</dbReference>
<dbReference type="EMBL" id="CR533503">
    <property type="protein sequence ID" value="CAG38534.1"/>
    <property type="molecule type" value="mRNA"/>
</dbReference>
<dbReference type="EMBL" id="AK223119">
    <property type="protein sequence ID" value="BAD96839.1"/>
    <property type="molecule type" value="mRNA"/>
</dbReference>
<dbReference type="EMBL" id="CH471062">
    <property type="protein sequence ID" value="EAW61590.1"/>
    <property type="molecule type" value="Genomic_DNA"/>
</dbReference>
<dbReference type="EMBL" id="CH471062">
    <property type="protein sequence ID" value="EAW61591.1"/>
    <property type="molecule type" value="Genomic_DNA"/>
</dbReference>
<dbReference type="EMBL" id="BC001523">
    <property type="protein sequence ID" value="AAH01523.2"/>
    <property type="status" value="ALT_INIT"/>
    <property type="molecule type" value="mRNA"/>
</dbReference>
<dbReference type="EMBL" id="BC001852">
    <property type="protein sequence ID" value="AAH01852.2"/>
    <property type="status" value="ALT_INIT"/>
    <property type="molecule type" value="mRNA"/>
</dbReference>
<dbReference type="EMBL" id="BC023521">
    <property type="protein sequence ID" value="AAH23521.1"/>
    <property type="molecule type" value="mRNA"/>
</dbReference>
<dbReference type="CCDS" id="CCDS4341.1"/>
<dbReference type="RefSeq" id="NP_001304753.1">
    <property type="nucleotide sequence ID" value="NM_001317824.1"/>
</dbReference>
<dbReference type="RefSeq" id="NP_001304754.1">
    <property type="nucleotide sequence ID" value="NM_001317825.1"/>
</dbReference>
<dbReference type="RefSeq" id="NP_001304755.1">
    <property type="nucleotide sequence ID" value="NM_001317826.1"/>
</dbReference>
<dbReference type="RefSeq" id="NP_060342.2">
    <property type="nucleotide sequence ID" value="NM_017872.5"/>
</dbReference>
<dbReference type="PDB" id="3OTB">
    <property type="method" value="X-ray"/>
    <property type="resolution" value="2.95 A"/>
    <property type="chains" value="A/B=30-298"/>
</dbReference>
<dbReference type="PDB" id="3OTC">
    <property type="method" value="X-ray"/>
    <property type="resolution" value="3.01 A"/>
    <property type="chains" value="A/B=30-298"/>
</dbReference>
<dbReference type="PDB" id="3OTD">
    <property type="method" value="X-ray"/>
    <property type="resolution" value="2.28 A"/>
    <property type="chains" value="A/B=30-298"/>
</dbReference>
<dbReference type="PDB" id="3OTE">
    <property type="method" value="X-ray"/>
    <property type="resolution" value="2.56 A"/>
    <property type="chains" value="A/B=30-298"/>
</dbReference>
<dbReference type="PDB" id="7CV1">
    <property type="method" value="X-ray"/>
    <property type="resolution" value="4.00 A"/>
    <property type="chains" value="A/B/C/D=30-298"/>
</dbReference>
<dbReference type="PDBsum" id="3OTB"/>
<dbReference type="PDBsum" id="3OTC"/>
<dbReference type="PDBsum" id="3OTD"/>
<dbReference type="PDBsum" id="3OTE"/>
<dbReference type="PDBsum" id="7CV1"/>
<dbReference type="SMR" id="Q9NWX6"/>
<dbReference type="BioGRID" id="120311">
    <property type="interactions" value="64"/>
</dbReference>
<dbReference type="DIP" id="DIP-59479N"/>
<dbReference type="FunCoup" id="Q9NWX6">
    <property type="interactions" value="1410"/>
</dbReference>
<dbReference type="IntAct" id="Q9NWX6">
    <property type="interactions" value="15"/>
</dbReference>
<dbReference type="MINT" id="Q9NWX6"/>
<dbReference type="STRING" id="9606.ENSP00000231198"/>
<dbReference type="GlyGen" id="Q9NWX6">
    <property type="glycosylation" value="1 site, 1 O-linked glycan (1 site)"/>
</dbReference>
<dbReference type="iPTMnet" id="Q9NWX6"/>
<dbReference type="PhosphoSitePlus" id="Q9NWX6"/>
<dbReference type="BioMuta" id="THG1L"/>
<dbReference type="DMDM" id="146325755"/>
<dbReference type="jPOST" id="Q9NWX6"/>
<dbReference type="MassIVE" id="Q9NWX6"/>
<dbReference type="PaxDb" id="9606-ENSP00000231198"/>
<dbReference type="PeptideAtlas" id="Q9NWX6"/>
<dbReference type="ProteomicsDB" id="82998"/>
<dbReference type="Pumba" id="Q9NWX6"/>
<dbReference type="Antibodypedia" id="28457">
    <property type="antibodies" value="93 antibodies from 22 providers"/>
</dbReference>
<dbReference type="DNASU" id="54974"/>
<dbReference type="Ensembl" id="ENST00000231198.12">
    <property type="protein sequence ID" value="ENSP00000231198.7"/>
    <property type="gene ID" value="ENSG00000113272.14"/>
</dbReference>
<dbReference type="GeneID" id="54974"/>
<dbReference type="KEGG" id="hsa:54974"/>
<dbReference type="MANE-Select" id="ENST00000231198.12">
    <property type="protein sequence ID" value="ENSP00000231198.7"/>
    <property type="RefSeq nucleotide sequence ID" value="NM_017872.5"/>
    <property type="RefSeq protein sequence ID" value="NP_060342.2"/>
</dbReference>
<dbReference type="UCSC" id="uc003lxd.4">
    <property type="organism name" value="human"/>
</dbReference>
<dbReference type="AGR" id="HGNC:26053"/>
<dbReference type="CTD" id="54974"/>
<dbReference type="DisGeNET" id="54974"/>
<dbReference type="GeneCards" id="THG1L"/>
<dbReference type="HGNC" id="HGNC:26053">
    <property type="gene designation" value="THG1L"/>
</dbReference>
<dbReference type="HPA" id="ENSG00000113272">
    <property type="expression patterns" value="Low tissue specificity"/>
</dbReference>
<dbReference type="MalaCards" id="THG1L"/>
<dbReference type="MIM" id="618800">
    <property type="type" value="phenotype"/>
</dbReference>
<dbReference type="MIM" id="618802">
    <property type="type" value="gene"/>
</dbReference>
<dbReference type="neXtProt" id="NX_Q9NWX6"/>
<dbReference type="OpenTargets" id="ENSG00000113272"/>
<dbReference type="PharmGKB" id="PA162405691"/>
<dbReference type="VEuPathDB" id="HostDB:ENSG00000113272"/>
<dbReference type="eggNOG" id="KOG2721">
    <property type="taxonomic scope" value="Eukaryota"/>
</dbReference>
<dbReference type="GeneTree" id="ENSGT00390000011705"/>
<dbReference type="HOGENOM" id="CLU_044271_0_0_1"/>
<dbReference type="InParanoid" id="Q9NWX6"/>
<dbReference type="OMA" id="WKQHTEI"/>
<dbReference type="OrthoDB" id="62560at2759"/>
<dbReference type="PAN-GO" id="Q9NWX6">
    <property type="GO annotations" value="2 GO annotations based on evolutionary models"/>
</dbReference>
<dbReference type="PhylomeDB" id="Q9NWX6"/>
<dbReference type="TreeFam" id="TF325119"/>
<dbReference type="BRENDA" id="2.7.7.79">
    <property type="organism ID" value="2681"/>
</dbReference>
<dbReference type="PathwayCommons" id="Q9NWX6"/>
<dbReference type="Reactome" id="R-HSA-6782315">
    <property type="pathway name" value="tRNA modification in the nucleus and cytosol"/>
</dbReference>
<dbReference type="SignaLink" id="Q9NWX6"/>
<dbReference type="BioGRID-ORCS" id="54974">
    <property type="hits" value="610 hits in 1169 CRISPR screens"/>
</dbReference>
<dbReference type="ChiTaRS" id="THG1L">
    <property type="organism name" value="human"/>
</dbReference>
<dbReference type="EvolutionaryTrace" id="Q9NWX6"/>
<dbReference type="GeneWiki" id="THG1L"/>
<dbReference type="GenomeRNAi" id="54974"/>
<dbReference type="Pharos" id="Q9NWX6">
    <property type="development level" value="Tbio"/>
</dbReference>
<dbReference type="PRO" id="PR:Q9NWX6"/>
<dbReference type="Proteomes" id="UP000005640">
    <property type="component" value="Chromosome 5"/>
</dbReference>
<dbReference type="RNAct" id="Q9NWX6">
    <property type="molecule type" value="protein"/>
</dbReference>
<dbReference type="Bgee" id="ENSG00000113272">
    <property type="expression patterns" value="Expressed in monocyte and 150 other cell types or tissues"/>
</dbReference>
<dbReference type="ExpressionAtlas" id="Q9NWX6">
    <property type="expression patterns" value="baseline and differential"/>
</dbReference>
<dbReference type="GO" id="GO:0005829">
    <property type="term" value="C:cytosol"/>
    <property type="evidence" value="ECO:0000304"/>
    <property type="project" value="Reactome"/>
</dbReference>
<dbReference type="GO" id="GO:0005741">
    <property type="term" value="C:mitochondrial outer membrane"/>
    <property type="evidence" value="ECO:0007669"/>
    <property type="project" value="UniProtKB-SubCell"/>
</dbReference>
<dbReference type="GO" id="GO:0005739">
    <property type="term" value="C:mitochondrion"/>
    <property type="evidence" value="ECO:0000314"/>
    <property type="project" value="LIFEdb"/>
</dbReference>
<dbReference type="GO" id="GO:1990234">
    <property type="term" value="C:transferase complex"/>
    <property type="evidence" value="ECO:0000314"/>
    <property type="project" value="BHF-UCL"/>
</dbReference>
<dbReference type="GO" id="GO:0005524">
    <property type="term" value="F:ATP binding"/>
    <property type="evidence" value="ECO:0000314"/>
    <property type="project" value="BHF-UCL"/>
</dbReference>
<dbReference type="GO" id="GO:0005525">
    <property type="term" value="F:GTP binding"/>
    <property type="evidence" value="ECO:0000314"/>
    <property type="project" value="BHF-UCL"/>
</dbReference>
<dbReference type="GO" id="GO:0005085">
    <property type="term" value="F:guanyl-nucleotide exchange factor activity"/>
    <property type="evidence" value="ECO:0000314"/>
    <property type="project" value="UniProtKB"/>
</dbReference>
<dbReference type="GO" id="GO:0042802">
    <property type="term" value="F:identical protein binding"/>
    <property type="evidence" value="ECO:0000353"/>
    <property type="project" value="IntAct"/>
</dbReference>
<dbReference type="GO" id="GO:0000287">
    <property type="term" value="F:magnesium ion binding"/>
    <property type="evidence" value="ECO:0000314"/>
    <property type="project" value="BHF-UCL"/>
</dbReference>
<dbReference type="GO" id="GO:0016779">
    <property type="term" value="F:nucleotidyltransferase activity"/>
    <property type="evidence" value="ECO:0000269"/>
    <property type="project" value="Reactome"/>
</dbReference>
<dbReference type="GO" id="GO:0000049">
    <property type="term" value="F:tRNA binding"/>
    <property type="evidence" value="ECO:0000304"/>
    <property type="project" value="BHF-UCL"/>
</dbReference>
<dbReference type="GO" id="GO:0008193">
    <property type="term" value="F:tRNA guanylyltransferase activity"/>
    <property type="evidence" value="ECO:0000314"/>
    <property type="project" value="UniProtKB"/>
</dbReference>
<dbReference type="GO" id="GO:0008053">
    <property type="term" value="P:mitochondrial fusion"/>
    <property type="evidence" value="ECO:0000314"/>
    <property type="project" value="UniProtKB"/>
</dbReference>
<dbReference type="GO" id="GO:0051289">
    <property type="term" value="P:protein homotetramerization"/>
    <property type="evidence" value="ECO:0000353"/>
    <property type="project" value="UniProtKB"/>
</dbReference>
<dbReference type="GO" id="GO:0006979">
    <property type="term" value="P:response to oxidative stress"/>
    <property type="evidence" value="ECO:0000314"/>
    <property type="project" value="UniProtKB"/>
</dbReference>
<dbReference type="GO" id="GO:1990046">
    <property type="term" value="P:stress-induced mitochondrial fusion"/>
    <property type="evidence" value="ECO:0000314"/>
    <property type="project" value="UniProtKB"/>
</dbReference>
<dbReference type="GO" id="GO:0006400">
    <property type="term" value="P:tRNA modification"/>
    <property type="evidence" value="ECO:0000250"/>
    <property type="project" value="UniProtKB"/>
</dbReference>
<dbReference type="GO" id="GO:0008033">
    <property type="term" value="P:tRNA processing"/>
    <property type="evidence" value="ECO:0000314"/>
    <property type="project" value="UniProtKB"/>
</dbReference>
<dbReference type="FunFam" id="3.30.70.3000:FF:000001">
    <property type="entry name" value="tRNA(His) guanylyltransferase"/>
    <property type="match status" value="1"/>
</dbReference>
<dbReference type="Gene3D" id="3.30.70.3000">
    <property type="match status" value="1"/>
</dbReference>
<dbReference type="InterPro" id="IPR025845">
    <property type="entry name" value="Thg1_C_dom"/>
</dbReference>
<dbReference type="InterPro" id="IPR024956">
    <property type="entry name" value="tRNAHis_GuaTrfase_cat"/>
</dbReference>
<dbReference type="InterPro" id="IPR007537">
    <property type="entry name" value="tRNAHis_GuaTrfase_Thg1"/>
</dbReference>
<dbReference type="InterPro" id="IPR038469">
    <property type="entry name" value="tRNAHis_GuaTrfase_Thg1_sf"/>
</dbReference>
<dbReference type="PANTHER" id="PTHR12729">
    <property type="entry name" value="TRNA(HIS) GUANYLYLTRANSFERASE-RELATED"/>
    <property type="match status" value="1"/>
</dbReference>
<dbReference type="PANTHER" id="PTHR12729:SF6">
    <property type="entry name" value="TRNA(HIS) GUANYLYLTRANSFERASE-RELATED"/>
    <property type="match status" value="1"/>
</dbReference>
<dbReference type="Pfam" id="PF04446">
    <property type="entry name" value="Thg1"/>
    <property type="match status" value="1"/>
</dbReference>
<dbReference type="Pfam" id="PF14413">
    <property type="entry name" value="Thg1C"/>
    <property type="match status" value="1"/>
</dbReference>
<dbReference type="PIRSF" id="PIRSF028980">
    <property type="entry name" value="tRNAHis_guanylyltransferase"/>
    <property type="match status" value="1"/>
</dbReference>
<feature type="chain" id="PRO_0000284984" description="Probable tRNA(His) guanylyltransferase">
    <location>
        <begin position="1"/>
        <end position="298"/>
    </location>
</feature>
<feature type="binding site" evidence="4">
    <location>
        <begin position="58"/>
        <end position="63"/>
    </location>
    <ligand>
        <name>GTP</name>
        <dbReference type="ChEBI" id="CHEBI:37565"/>
    </ligand>
</feature>
<feature type="binding site" evidence="4">
    <location>
        <position position="58"/>
    </location>
    <ligand>
        <name>Mg(2+)</name>
        <dbReference type="ChEBI" id="CHEBI:18420"/>
        <label>1</label>
        <note>catalytic</note>
    </ligand>
</feature>
<feature type="binding site" evidence="4">
    <location>
        <position position="58"/>
    </location>
    <ligand>
        <name>Mg(2+)</name>
        <dbReference type="ChEBI" id="CHEBI:18420"/>
        <label>2</label>
        <note>catalytic</note>
    </ligand>
</feature>
<feature type="binding site" evidence="4">
    <location>
        <position position="59"/>
    </location>
    <ligand>
        <name>Mg(2+)</name>
        <dbReference type="ChEBI" id="CHEBI:18420"/>
        <label>1</label>
        <note>catalytic</note>
    </ligand>
</feature>
<feature type="binding site" evidence="4">
    <location>
        <begin position="104"/>
        <end position="105"/>
    </location>
    <ligand>
        <name>GTP</name>
        <dbReference type="ChEBI" id="CHEBI:37565"/>
    </ligand>
</feature>
<feature type="binding site" evidence="4">
    <location>
        <position position="105"/>
    </location>
    <ligand>
        <name>Mg(2+)</name>
        <dbReference type="ChEBI" id="CHEBI:18420"/>
        <label>1</label>
        <note>catalytic</note>
    </ligand>
</feature>
<feature type="binding site" evidence="4">
    <location>
        <position position="105"/>
    </location>
    <ligand>
        <name>Mg(2+)</name>
        <dbReference type="ChEBI" id="CHEBI:18420"/>
        <label>2</label>
        <note>catalytic</note>
    </ligand>
</feature>
<feature type="sequence variant" id="VAR_083901" description="In SCAR28; decreased mitochondrial fusion; dbSNP:rs201920319." evidence="6 8">
    <original>V</original>
    <variation>A</variation>
    <location>
        <position position="55"/>
    </location>
</feature>
<feature type="sequence variant" id="VAR_031871" description="In dbSNP:rs2270812." evidence="1 3 9 10">
    <original>L</original>
    <variation>P</variation>
    <location>
        <position position="232"/>
    </location>
</feature>
<feature type="sequence variant" id="VAR_083902" description="Found in a patient with a severe multisystemic growth disorder and cerebellar atrophy; uncertain significance; dbSNP:rs1581444231." evidence="7">
    <original>L</original>
    <variation>P</variation>
    <location>
        <position position="294"/>
    </location>
</feature>
<feature type="mutagenesis site" description="Reduces activity by 99.5%." evidence="4">
    <original>D</original>
    <variation>A</variation>
    <location>
        <position position="58"/>
    </location>
</feature>
<feature type="mutagenesis site" description="Slightly reduced enzyme activity." evidence="4">
    <original>H</original>
    <variation>A</variation>
    <location>
        <position position="63"/>
    </location>
</feature>
<feature type="mutagenesis site" description="Slightly reduced enzyme activity." evidence="4">
    <original>S</original>
    <variation>A</variation>
    <location>
        <position position="104"/>
    </location>
</feature>
<feature type="mutagenesis site" description="Loss of enzyme activity." evidence="4">
    <original>D</original>
    <variation>A</variation>
    <location>
        <position position="105"/>
    </location>
</feature>
<feature type="mutagenesis site" description="Reduces activity by 95%." evidence="4">
    <original>E</original>
    <variation>A</variation>
    <location>
        <position position="106"/>
    </location>
</feature>
<feature type="mutagenesis site" description="Abolishes oligomerization. Loss of enzyme activity." evidence="4">
    <original>T</original>
    <variation>A</variation>
    <location>
        <position position="127"/>
    </location>
</feature>
<feature type="mutagenesis site" description="Loss of enzyme activity." evidence="4">
    <original>H</original>
    <variation>A</variation>
    <location>
        <position position="181"/>
    </location>
</feature>
<feature type="mutagenesis site" description="Reduces activity by 98.5%." evidence="4">
    <original>K</original>
    <variation>A</variation>
    <location>
        <position position="216"/>
    </location>
</feature>
<feature type="mutagenesis site" description="Loss of enzyme activity." evidence="4">
    <original>N</original>
    <variation>A</variation>
    <location>
        <position position="227"/>
    </location>
</feature>
<feature type="sequence conflict" description="In Ref. 5; BAD96839." evidence="12" ref="5">
    <original>L</original>
    <variation>Q</variation>
    <location>
        <position position="57"/>
    </location>
</feature>
<feature type="helix" evidence="16">
    <location>
        <begin position="36"/>
        <end position="41"/>
    </location>
</feature>
<feature type="strand" evidence="16">
    <location>
        <begin position="51"/>
        <end position="59"/>
    </location>
</feature>
<feature type="helix" evidence="16">
    <location>
        <begin position="62"/>
        <end position="68"/>
    </location>
</feature>
<feature type="helix" evidence="16">
    <location>
        <begin position="77"/>
        <end position="93"/>
    </location>
</feature>
<feature type="strand" evidence="16">
    <location>
        <begin position="94"/>
        <end position="103"/>
    </location>
</feature>
<feature type="strand" evidence="16">
    <location>
        <begin position="106"/>
        <end position="111"/>
    </location>
</feature>
<feature type="turn" evidence="16">
    <location>
        <begin position="117"/>
        <end position="120"/>
    </location>
</feature>
<feature type="helix" evidence="16">
    <location>
        <begin position="122"/>
        <end position="139"/>
    </location>
</feature>
<feature type="helix" evidence="16">
    <location>
        <begin position="141"/>
        <end position="144"/>
    </location>
</feature>
<feature type="strand" evidence="16">
    <location>
        <begin position="146"/>
        <end position="148"/>
    </location>
</feature>
<feature type="strand" evidence="16">
    <location>
        <begin position="156"/>
        <end position="165"/>
    </location>
</feature>
<feature type="helix" evidence="16">
    <location>
        <begin position="166"/>
        <end position="195"/>
    </location>
</feature>
<feature type="helix" evidence="16">
    <location>
        <begin position="201"/>
        <end position="208"/>
    </location>
</feature>
<feature type="helix" evidence="16">
    <location>
        <begin position="213"/>
        <end position="224"/>
    </location>
</feature>
<feature type="helix" evidence="16">
    <location>
        <begin position="228"/>
        <end position="230"/>
    </location>
</feature>
<feature type="helix" evidence="16">
    <location>
        <begin position="233"/>
        <end position="237"/>
    </location>
</feature>
<feature type="strand" evidence="16">
    <location>
        <begin position="239"/>
        <end position="243"/>
    </location>
</feature>
<feature type="strand" evidence="16">
    <location>
        <begin position="274"/>
        <end position="277"/>
    </location>
</feature>
<feature type="strand" evidence="15">
    <location>
        <begin position="281"/>
        <end position="283"/>
    </location>
</feature>
<feature type="helix" evidence="16">
    <location>
        <begin position="284"/>
        <end position="289"/>
    </location>
</feature>
<feature type="helix" evidence="16">
    <location>
        <begin position="292"/>
        <end position="295"/>
    </location>
</feature>